<reference key="1">
    <citation type="journal article" date="2005" name="Nature">
        <title>The genome sequence of the rice blast fungus Magnaporthe grisea.</title>
        <authorList>
            <person name="Dean R.A."/>
            <person name="Talbot N.J."/>
            <person name="Ebbole D.J."/>
            <person name="Farman M.L."/>
            <person name="Mitchell T.K."/>
            <person name="Orbach M.J."/>
            <person name="Thon M.R."/>
            <person name="Kulkarni R."/>
            <person name="Xu J.-R."/>
            <person name="Pan H."/>
            <person name="Read N.D."/>
            <person name="Lee Y.-H."/>
            <person name="Carbone I."/>
            <person name="Brown D."/>
            <person name="Oh Y.Y."/>
            <person name="Donofrio N."/>
            <person name="Jeong J.S."/>
            <person name="Soanes D.M."/>
            <person name="Djonovic S."/>
            <person name="Kolomiets E."/>
            <person name="Rehmeyer C."/>
            <person name="Li W."/>
            <person name="Harding M."/>
            <person name="Kim S."/>
            <person name="Lebrun M.-H."/>
            <person name="Bohnert H."/>
            <person name="Coughlan S."/>
            <person name="Butler J."/>
            <person name="Calvo S.E."/>
            <person name="Ma L.-J."/>
            <person name="Nicol R."/>
            <person name="Purcell S."/>
            <person name="Nusbaum C."/>
            <person name="Galagan J.E."/>
            <person name="Birren B.W."/>
        </authorList>
    </citation>
    <scope>NUCLEOTIDE SEQUENCE [LARGE SCALE GENOMIC DNA]</scope>
    <source>
        <strain>70-15 / ATCC MYA-4617 / FGSC 8958</strain>
    </source>
</reference>
<reference key="2">
    <citation type="journal article" date="2012" name="PLoS Pathog.">
        <title>Different chitin synthase genes are required for various developmental and plant infection processes in the rice blast fungus Magnaporthe oryzae.</title>
        <authorList>
            <person name="Kong L.A."/>
            <person name="Yang J."/>
            <person name="Li G.T."/>
            <person name="Qi L.L."/>
            <person name="Zhang Y.J."/>
            <person name="Wang C.F."/>
            <person name="Zhao W.S."/>
            <person name="Xu J.R."/>
            <person name="Peng Y.L."/>
        </authorList>
    </citation>
    <scope>FUNCTION</scope>
    <scope>INDUCTION</scope>
    <scope>DISRUPTION PHENOTYPE</scope>
</reference>
<evidence type="ECO:0000255" key="1"/>
<evidence type="ECO:0000255" key="2">
    <source>
        <dbReference type="PROSITE-ProRule" id="PRU00498"/>
    </source>
</evidence>
<evidence type="ECO:0000255" key="3">
    <source>
        <dbReference type="PROSITE-ProRule" id="PRU01342"/>
    </source>
</evidence>
<evidence type="ECO:0000256" key="4">
    <source>
        <dbReference type="SAM" id="MobiDB-lite"/>
    </source>
</evidence>
<evidence type="ECO:0000269" key="5">
    <source>
    </source>
</evidence>
<evidence type="ECO:0000303" key="6">
    <source>
    </source>
</evidence>
<evidence type="ECO:0000305" key="7"/>
<evidence type="ECO:0000305" key="8">
    <source>
    </source>
</evidence>
<protein>
    <recommendedName>
        <fullName evidence="6">Chitin synthase 5</fullName>
        <ecNumber evidence="8">2.4.1.16</ecNumber>
    </recommendedName>
    <alternativeName>
        <fullName evidence="7">Chitin-UDP acetyl-glucosaminyl transferase 5</fullName>
    </alternativeName>
    <alternativeName>
        <fullName evidence="6">Class-V chitin synthase 5</fullName>
    </alternativeName>
</protein>
<gene>
    <name evidence="6" type="primary">CHS5</name>
    <name type="ORF">MGG_13014</name>
</gene>
<sequence length="1787" mass="197635">MASRRMSMYSVTSEGMGGPRGAGQQSTSVSTTTLLNAIHNIYLASQPYRLDAGTSLVVNTWLTATQAGPDGEVGGTVDPALAARAWEHARRRAEDGCIILGSLHQSTPSVMKPFLRSFPVSLPSSVFKALEALDPFIHCVAPFNPSAPRHAALGVTLTMNLAGNVTAASIALSQAGIDTAAGLLSIPAEAGYRAFDVFYHLLSSASTPAEREFLGLKSASSYALLARSGTYDPPSYLPTADDGASADDLRAALKEIGIKGSSHRDFISTLAALLKLGDTLDYTVDEEVLEEVCEDVGGLLGVDPEVLAKQCTTEDRQTLVGGLYEALVDWVISKANQAIQAQLARIRDGDESSDGGRGARTPNSAEDNGDTVCLTILEVPDLALAKALAMRGIFDDSQGINSEMKQDGVEVASAGQSVLRETQNAVVEAGPLLGDMSGPKGRDRQHHLEKREEVLEKVGIVADDDCFFKKLLFPVSGQGIQLGQAGRLDIQGVLGSSRAWYHLSIHPTDDSPASLAALPSINSAWSAGTVSRQLRAWRLPEWANRRNKNLDFTADFDVEEFVQRYSILGCREGRDGIETWILERGWSNGEVVVGHERVWMRESAWWEAENMLDMKPMGDMPMGASNLMAPPGVMAMDTGYSHNGSGYFPPINDAASNGSRDQLLHQRNQSQATLAMGMGHSPGVAPSVAPSGLRNVSKGDYGLGGKGDNHRDEILFNNEGEFVGALDPELANNKKIEEQQTSKSRRMWVALVWAITFWIPSPLLRYVGRMKRPDVRMAWREKFVLCFIIFLLNAAIVFWIIFLGRLLCPNFDKVWTRDEVKQHQGDTDFWVSNRGKVYDISKFWKIPHGDVGNEATQDLMQPFAGLSMDAYIPPPLFKACPGLGIGDRLALVPNATETENSAGMHISGPGQANPTSGLADANWYPDVFLPRMKEYYKGELVWDASKINSEGQNQDHKWVIYDNKVYDLRDYFSTLKTMNNLAQYKFLDDSLTQVVERNPGTDVTGTWNGLLSNAQRNNLTTYTTLRNNMNCMDNYFYVGTVDFRYTARCQTNNYFLLAFAIIMCAVILLKFVSALQFGSKRRPSPQDKFVICQVPAYTEGEDSLRKALDSLTALQYDNKRKLICVICDGVLTGEGNDRPTPKIVLDILGVDPKVDPPALPFKSVGASSEQLNYGKVYSGLYEFEGNVVPYVVVVKVGKESEQSKAKPGNRGKRDSQILLMSFLNRVHHRAPMNPLELEMFHQINNIIGVDPELYEYLLMIDADTCVREDALTRLVASCASDAKIAGICGETSLQNEERSWWTMIQVYEYFISHHLAKAFESLFGSVTCLPGCFTMYRLRTADKGKPLIISDNVIRDYSDCYVDTLHKKNLLSLGEDRYLTTLMTKHFPYMSFKFNPNAFCQTAAPEKWSVLLSQRRRWINSTIHNLVELMTLKEMCGFCCFSMRFVVFVDLFGTIILPATCVYLGYLIYTVASGTGPFPLITLIMLAAVYGLQALIFILKRQWQHIGWMIIYLLAFPIYSFILPIYSFWNQDNFSWGNTRIVVGESGKKTIVAVDDEGFDPRSIPLQRWDDYALANNLPGRRGGAGPTEKMDHVFADAYEMDDMRSVYSAARPGSVLTGMNRNTAYMSPNSPAPYQHMSRSPTAYAGPTPYSDNPAARQSMVSMSPYQDTNHGRMMSMSNLRNVANASPVPTRAGTAMGFAGGSRAPLGQSEAARQSTMSFDFQRNAAGPDDFQIVDAIRAVLMEVDLDTVTKKQVRALVEQRLQTELVGERRTFLDRQIDNELANM</sequence>
<feature type="chain" id="PRO_0000460879" description="Chitin synthase 5">
    <location>
        <begin position="1"/>
        <end position="1787"/>
    </location>
</feature>
<feature type="transmembrane region" description="Helical" evidence="1">
    <location>
        <begin position="747"/>
        <end position="767"/>
    </location>
</feature>
<feature type="transmembrane region" description="Helical" evidence="1">
    <location>
        <begin position="783"/>
        <end position="803"/>
    </location>
</feature>
<feature type="transmembrane region" description="Helical" evidence="1">
    <location>
        <begin position="1055"/>
        <end position="1075"/>
    </location>
</feature>
<feature type="transmembrane region" description="Helical" evidence="1">
    <location>
        <begin position="1445"/>
        <end position="1465"/>
    </location>
</feature>
<feature type="transmembrane region" description="Helical" evidence="1">
    <location>
        <begin position="1478"/>
        <end position="1498"/>
    </location>
</feature>
<feature type="transmembrane region" description="Helical" evidence="1">
    <location>
        <begin position="1506"/>
        <end position="1526"/>
    </location>
</feature>
<feature type="domain" description="DEK-C" evidence="3">
    <location>
        <begin position="1729"/>
        <end position="1785"/>
    </location>
</feature>
<feature type="region of interest" description="Disordered" evidence="4">
    <location>
        <begin position="1"/>
        <end position="26"/>
    </location>
</feature>
<feature type="region of interest" description="Disordered" evidence="4">
    <location>
        <begin position="345"/>
        <end position="367"/>
    </location>
</feature>
<feature type="region of interest" description="Disordered" evidence="4">
    <location>
        <begin position="1628"/>
        <end position="1657"/>
    </location>
</feature>
<feature type="glycosylation site" description="N-linked (GlcNAc...) asparagine" evidence="2">
    <location>
        <position position="164"/>
    </location>
</feature>
<feature type="glycosylation site" description="N-linked (GlcNAc...) asparagine" evidence="2">
    <location>
        <position position="643"/>
    </location>
</feature>
<feature type="glycosylation site" description="N-linked (GlcNAc...) asparagine" evidence="2">
    <location>
        <position position="657"/>
    </location>
</feature>
<feature type="glycosylation site" description="N-linked (GlcNAc...) asparagine" evidence="2">
    <location>
        <position position="668"/>
    </location>
</feature>
<feature type="glycosylation site" description="N-linked (GlcNAc...) asparagine" evidence="2">
    <location>
        <position position="695"/>
    </location>
</feature>
<feature type="glycosylation site" description="N-linked (GlcNAc...) asparagine" evidence="2">
    <location>
        <position position="894"/>
    </location>
</feature>
<feature type="glycosylation site" description="N-linked (GlcNAc...) asparagine" evidence="2">
    <location>
        <position position="1018"/>
    </location>
</feature>
<feature type="glycosylation site" description="N-linked (GlcNAc...) asparagine" evidence="2">
    <location>
        <position position="1420"/>
    </location>
</feature>
<feature type="glycosylation site" description="N-linked (GlcNAc...) asparagine" evidence="2">
    <location>
        <position position="1533"/>
    </location>
</feature>
<proteinExistence type="evidence at transcript level"/>
<dbReference type="EC" id="2.4.1.16" evidence="8"/>
<dbReference type="EMBL" id="CM001233">
    <property type="protein sequence ID" value="EHA52351.1"/>
    <property type="molecule type" value="Genomic_DNA"/>
</dbReference>
<dbReference type="RefSeq" id="XP_003712158.1">
    <property type="nucleotide sequence ID" value="XM_003712110.1"/>
</dbReference>
<dbReference type="STRING" id="242507.G4N0X3"/>
<dbReference type="EnsemblFungi" id="MGG_13014T0">
    <property type="protein sequence ID" value="MGG_13014T0"/>
    <property type="gene ID" value="MGG_13014"/>
</dbReference>
<dbReference type="GeneID" id="5048948"/>
<dbReference type="KEGG" id="mgr:MGG_13014"/>
<dbReference type="VEuPathDB" id="FungiDB:MGG_13014"/>
<dbReference type="eggNOG" id="KOG2571">
    <property type="taxonomic scope" value="Eukaryota"/>
</dbReference>
<dbReference type="HOGENOM" id="CLU_000192_0_0_1"/>
<dbReference type="InParanoid" id="G4N0X3"/>
<dbReference type="OMA" id="RLAEWAN"/>
<dbReference type="OrthoDB" id="370884at2759"/>
<dbReference type="Proteomes" id="UP000009058">
    <property type="component" value="Chromosome 3"/>
</dbReference>
<dbReference type="GO" id="GO:0030428">
    <property type="term" value="C:cell septum"/>
    <property type="evidence" value="ECO:0007669"/>
    <property type="project" value="TreeGrafter"/>
</dbReference>
<dbReference type="GO" id="GO:0016459">
    <property type="term" value="C:myosin complex"/>
    <property type="evidence" value="ECO:0007669"/>
    <property type="project" value="InterPro"/>
</dbReference>
<dbReference type="GO" id="GO:0005886">
    <property type="term" value="C:plasma membrane"/>
    <property type="evidence" value="ECO:0007669"/>
    <property type="project" value="UniProtKB-SubCell"/>
</dbReference>
<dbReference type="GO" id="GO:0005524">
    <property type="term" value="F:ATP binding"/>
    <property type="evidence" value="ECO:0007669"/>
    <property type="project" value="InterPro"/>
</dbReference>
<dbReference type="GO" id="GO:0004100">
    <property type="term" value="F:chitin synthase activity"/>
    <property type="evidence" value="ECO:0007669"/>
    <property type="project" value="UniProtKB-EC"/>
</dbReference>
<dbReference type="GO" id="GO:0003774">
    <property type="term" value="F:cytoskeletal motor activity"/>
    <property type="evidence" value="ECO:0007669"/>
    <property type="project" value="InterPro"/>
</dbReference>
<dbReference type="GO" id="GO:0006031">
    <property type="term" value="P:chitin biosynthetic process"/>
    <property type="evidence" value="ECO:0007669"/>
    <property type="project" value="TreeGrafter"/>
</dbReference>
<dbReference type="GO" id="GO:0031505">
    <property type="term" value="P:fungal-type cell wall organization"/>
    <property type="evidence" value="ECO:0007669"/>
    <property type="project" value="TreeGrafter"/>
</dbReference>
<dbReference type="FunFam" id="1.10.10.820:FF:000010">
    <property type="entry name" value="Chitin synthase 6"/>
    <property type="match status" value="1"/>
</dbReference>
<dbReference type="Gene3D" id="1.10.10.820">
    <property type="match status" value="1"/>
</dbReference>
<dbReference type="Gene3D" id="3.10.120.10">
    <property type="entry name" value="Cytochrome b5-like heme/steroid binding domain"/>
    <property type="match status" value="1"/>
</dbReference>
<dbReference type="Gene3D" id="1.10.10.60">
    <property type="entry name" value="Homeodomain-like"/>
    <property type="match status" value="1"/>
</dbReference>
<dbReference type="InterPro" id="IPR004835">
    <property type="entry name" value="Chitin_synth"/>
</dbReference>
<dbReference type="InterPro" id="IPR001199">
    <property type="entry name" value="Cyt_B5-like_heme/steroid-bd"/>
</dbReference>
<dbReference type="InterPro" id="IPR036400">
    <property type="entry name" value="Cyt_B5-like_heme/steroid_sf"/>
</dbReference>
<dbReference type="InterPro" id="IPR014876">
    <property type="entry name" value="DEK_C"/>
</dbReference>
<dbReference type="InterPro" id="IPR001609">
    <property type="entry name" value="Myosin_head_motor_dom-like"/>
</dbReference>
<dbReference type="InterPro" id="IPR029044">
    <property type="entry name" value="Nucleotide-diphossugar_trans"/>
</dbReference>
<dbReference type="InterPro" id="IPR027417">
    <property type="entry name" value="P-loop_NTPase"/>
</dbReference>
<dbReference type="PANTHER" id="PTHR22914">
    <property type="entry name" value="CHITIN SYNTHASE"/>
    <property type="match status" value="1"/>
</dbReference>
<dbReference type="PANTHER" id="PTHR22914:SF13">
    <property type="entry name" value="CHITIN SYNTHASE"/>
    <property type="match status" value="1"/>
</dbReference>
<dbReference type="Pfam" id="PF03142">
    <property type="entry name" value="Chitin_synth_2"/>
    <property type="match status" value="1"/>
</dbReference>
<dbReference type="Pfam" id="PF00173">
    <property type="entry name" value="Cyt-b5"/>
    <property type="match status" value="1"/>
</dbReference>
<dbReference type="Pfam" id="PF08766">
    <property type="entry name" value="DEK_C"/>
    <property type="match status" value="1"/>
</dbReference>
<dbReference type="SMART" id="SM00242">
    <property type="entry name" value="MYSc"/>
    <property type="match status" value="1"/>
</dbReference>
<dbReference type="SUPFAM" id="SSF55856">
    <property type="entry name" value="Cytochrome b5-like heme/steroid binding domain"/>
    <property type="match status" value="1"/>
</dbReference>
<dbReference type="SUPFAM" id="SSF109715">
    <property type="entry name" value="DEK C-terminal domain"/>
    <property type="match status" value="1"/>
</dbReference>
<dbReference type="SUPFAM" id="SSF53448">
    <property type="entry name" value="Nucleotide-diphospho-sugar transferases"/>
    <property type="match status" value="1"/>
</dbReference>
<dbReference type="SUPFAM" id="SSF52540">
    <property type="entry name" value="P-loop containing nucleoside triphosphate hydrolases"/>
    <property type="match status" value="1"/>
</dbReference>
<dbReference type="PROSITE" id="PS51998">
    <property type="entry name" value="DEK_C"/>
    <property type="match status" value="1"/>
</dbReference>
<comment type="function">
    <text evidence="5 8">Polymerizes chitin, a structural polymer of the cell wall and septum, by transferring the sugar moiety of UDP-GlcNAc to the non-reducing end of the growing chitin polymer (Probable). May play a minor overlapping role with CHS6 in growth and differentiation (PubMed:22346755).</text>
</comment>
<comment type="catalytic activity">
    <reaction evidence="8">
        <text>[(1-&gt;4)-N-acetyl-beta-D-glucosaminyl](n) + UDP-N-acetyl-alpha-D-glucosamine = [(1-&gt;4)-N-acetyl-beta-D-glucosaminyl](n+1) + UDP + H(+)</text>
        <dbReference type="Rhea" id="RHEA:16637"/>
        <dbReference type="Rhea" id="RHEA-COMP:9593"/>
        <dbReference type="Rhea" id="RHEA-COMP:9595"/>
        <dbReference type="ChEBI" id="CHEBI:15378"/>
        <dbReference type="ChEBI" id="CHEBI:17029"/>
        <dbReference type="ChEBI" id="CHEBI:57705"/>
        <dbReference type="ChEBI" id="CHEBI:58223"/>
        <dbReference type="EC" id="2.4.1.16"/>
    </reaction>
    <physiologicalReaction direction="left-to-right" evidence="8">
        <dbReference type="Rhea" id="RHEA:16638"/>
    </physiologicalReaction>
</comment>
<comment type="subcellular location">
    <subcellularLocation>
        <location evidence="7">Cell membrane</location>
        <topology evidence="1">Multi-pass membrane protein</topology>
    </subcellularLocation>
</comment>
<comment type="induction">
    <text evidence="5">Expression is induced in vegetative hyphae and infected rice leaves.</text>
</comment>
<comment type="disruption phenotype">
    <text evidence="5">Does not affect vegetative growth (PubMed:22346755). Does not significantly changes in the chitin content in vegetative hyphae, nor in conidia (PubMed:22346755).</text>
</comment>
<comment type="similarity">
    <text evidence="7">Belongs to the chitin synthase family. Class V subfamily.</text>
</comment>
<organism>
    <name type="scientific">Pyricularia oryzae (strain 70-15 / ATCC MYA-4617 / FGSC 8958)</name>
    <name type="common">Rice blast fungus</name>
    <name type="synonym">Magnaporthe oryzae</name>
    <dbReference type="NCBI Taxonomy" id="242507"/>
    <lineage>
        <taxon>Eukaryota</taxon>
        <taxon>Fungi</taxon>
        <taxon>Dikarya</taxon>
        <taxon>Ascomycota</taxon>
        <taxon>Pezizomycotina</taxon>
        <taxon>Sordariomycetes</taxon>
        <taxon>Sordariomycetidae</taxon>
        <taxon>Magnaporthales</taxon>
        <taxon>Pyriculariaceae</taxon>
        <taxon>Pyricularia</taxon>
    </lineage>
</organism>
<accession>G4N0X3</accession>
<keyword id="KW-1003">Cell membrane</keyword>
<keyword id="KW-0325">Glycoprotein</keyword>
<keyword id="KW-0328">Glycosyltransferase</keyword>
<keyword id="KW-0472">Membrane</keyword>
<keyword id="KW-1185">Reference proteome</keyword>
<keyword id="KW-0808">Transferase</keyword>
<keyword id="KW-0812">Transmembrane</keyword>
<keyword id="KW-1133">Transmembrane helix</keyword>
<name>CHS5_PYRO7</name>